<evidence type="ECO:0000255" key="1">
    <source>
        <dbReference type="HAMAP-Rule" id="MF_03159"/>
    </source>
</evidence>
<evidence type="ECO:0000305" key="2"/>
<evidence type="ECO:0000312" key="3">
    <source>
        <dbReference type="FlyBase" id="FBgn0030178"/>
    </source>
</evidence>
<sequence length="230" mass="25515">MDLKYLNQKEAIAVDQELFNDYKFSVDQLMELAGLSCAHAVAKCFPAEKHPRILVCCGPGNNGGDGLVAARHLALMGYTPTIYYPKPTAKPLFENLSHQCQQMDICDVKECPSVESAARDYDLILDALFGFSFKPPVRADFVAVVELMQQTKLPIASVDIPSGWDVEKGKLTECDVEPALLISLTAPKLCARQFRGEHHYLGGRFVPPALQRKYELNLPVYPGNELCVKL</sequence>
<comment type="function">
    <text evidence="1">Catalyzes the epimerization of the S- and R-forms of NAD(P)HX, a damaged form of NAD(P)H that is a result of enzymatic or heat-dependent hydration. This is a prerequisite for the S-specific NAD(P)H-hydrate dehydratase to allow the repair of both epimers of NAD(P)HX.</text>
</comment>
<comment type="catalytic activity">
    <reaction>
        <text>(6R)-NADHX = (6S)-NADHX</text>
        <dbReference type="Rhea" id="RHEA:32215"/>
        <dbReference type="ChEBI" id="CHEBI:64074"/>
        <dbReference type="ChEBI" id="CHEBI:64075"/>
        <dbReference type="EC" id="5.1.99.6"/>
    </reaction>
</comment>
<comment type="catalytic activity">
    <reaction>
        <text>(6R)-NADPHX = (6S)-NADPHX</text>
        <dbReference type="Rhea" id="RHEA:32227"/>
        <dbReference type="ChEBI" id="CHEBI:64076"/>
        <dbReference type="ChEBI" id="CHEBI:64077"/>
        <dbReference type="EC" id="5.1.99.6"/>
    </reaction>
</comment>
<comment type="cofactor">
    <cofactor evidence="1">
        <name>K(+)</name>
        <dbReference type="ChEBI" id="CHEBI:29103"/>
    </cofactor>
    <text evidence="1">Binds 1 potassium ion per subunit.</text>
</comment>
<comment type="similarity">
    <text evidence="1">Belongs to the NnrE/AIBP family.</text>
</comment>
<comment type="sequence caution" evidence="2">
    <conflict type="erroneous initiation">
        <sequence resource="EMBL-CDS" id="AAM11267"/>
    </conflict>
</comment>
<comment type="sequence caution" evidence="2">
    <conflict type="erroneous initiation">
        <sequence resource="EMBL-CDS" id="ACJ13219"/>
    </conflict>
</comment>
<reference key="1">
    <citation type="journal article" date="2000" name="Science">
        <title>The genome sequence of Drosophila melanogaster.</title>
        <authorList>
            <person name="Adams M.D."/>
            <person name="Celniker S.E."/>
            <person name="Holt R.A."/>
            <person name="Evans C.A."/>
            <person name="Gocayne J.D."/>
            <person name="Amanatides P.G."/>
            <person name="Scherer S.E."/>
            <person name="Li P.W."/>
            <person name="Hoskins R.A."/>
            <person name="Galle R.F."/>
            <person name="George R.A."/>
            <person name="Lewis S.E."/>
            <person name="Richards S."/>
            <person name="Ashburner M."/>
            <person name="Henderson S.N."/>
            <person name="Sutton G.G."/>
            <person name="Wortman J.R."/>
            <person name="Yandell M.D."/>
            <person name="Zhang Q."/>
            <person name="Chen L.X."/>
            <person name="Brandon R.C."/>
            <person name="Rogers Y.-H.C."/>
            <person name="Blazej R.G."/>
            <person name="Champe M."/>
            <person name="Pfeiffer B.D."/>
            <person name="Wan K.H."/>
            <person name="Doyle C."/>
            <person name="Baxter E.G."/>
            <person name="Helt G."/>
            <person name="Nelson C.R."/>
            <person name="Miklos G.L.G."/>
            <person name="Abril J.F."/>
            <person name="Agbayani A."/>
            <person name="An H.-J."/>
            <person name="Andrews-Pfannkoch C."/>
            <person name="Baldwin D."/>
            <person name="Ballew R.M."/>
            <person name="Basu A."/>
            <person name="Baxendale J."/>
            <person name="Bayraktaroglu L."/>
            <person name="Beasley E.M."/>
            <person name="Beeson K.Y."/>
            <person name="Benos P.V."/>
            <person name="Berman B.P."/>
            <person name="Bhandari D."/>
            <person name="Bolshakov S."/>
            <person name="Borkova D."/>
            <person name="Botchan M.R."/>
            <person name="Bouck J."/>
            <person name="Brokstein P."/>
            <person name="Brottier P."/>
            <person name="Burtis K.C."/>
            <person name="Busam D.A."/>
            <person name="Butler H."/>
            <person name="Cadieu E."/>
            <person name="Center A."/>
            <person name="Chandra I."/>
            <person name="Cherry J.M."/>
            <person name="Cawley S."/>
            <person name="Dahlke C."/>
            <person name="Davenport L.B."/>
            <person name="Davies P."/>
            <person name="de Pablos B."/>
            <person name="Delcher A."/>
            <person name="Deng Z."/>
            <person name="Mays A.D."/>
            <person name="Dew I."/>
            <person name="Dietz S.M."/>
            <person name="Dodson K."/>
            <person name="Doup L.E."/>
            <person name="Downes M."/>
            <person name="Dugan-Rocha S."/>
            <person name="Dunkov B.C."/>
            <person name="Dunn P."/>
            <person name="Durbin K.J."/>
            <person name="Evangelista C.C."/>
            <person name="Ferraz C."/>
            <person name="Ferriera S."/>
            <person name="Fleischmann W."/>
            <person name="Fosler C."/>
            <person name="Gabrielian A.E."/>
            <person name="Garg N.S."/>
            <person name="Gelbart W.M."/>
            <person name="Glasser K."/>
            <person name="Glodek A."/>
            <person name="Gong F."/>
            <person name="Gorrell J.H."/>
            <person name="Gu Z."/>
            <person name="Guan P."/>
            <person name="Harris M."/>
            <person name="Harris N.L."/>
            <person name="Harvey D.A."/>
            <person name="Heiman T.J."/>
            <person name="Hernandez J.R."/>
            <person name="Houck J."/>
            <person name="Hostin D."/>
            <person name="Houston K.A."/>
            <person name="Howland T.J."/>
            <person name="Wei M.-H."/>
            <person name="Ibegwam C."/>
            <person name="Jalali M."/>
            <person name="Kalush F."/>
            <person name="Karpen G.H."/>
            <person name="Ke Z."/>
            <person name="Kennison J.A."/>
            <person name="Ketchum K.A."/>
            <person name="Kimmel B.E."/>
            <person name="Kodira C.D."/>
            <person name="Kraft C.L."/>
            <person name="Kravitz S."/>
            <person name="Kulp D."/>
            <person name="Lai Z."/>
            <person name="Lasko P."/>
            <person name="Lei Y."/>
            <person name="Levitsky A.A."/>
            <person name="Li J.H."/>
            <person name="Li Z."/>
            <person name="Liang Y."/>
            <person name="Lin X."/>
            <person name="Liu X."/>
            <person name="Mattei B."/>
            <person name="McIntosh T.C."/>
            <person name="McLeod M.P."/>
            <person name="McPherson D."/>
            <person name="Merkulov G."/>
            <person name="Milshina N.V."/>
            <person name="Mobarry C."/>
            <person name="Morris J."/>
            <person name="Moshrefi A."/>
            <person name="Mount S.M."/>
            <person name="Moy M."/>
            <person name="Murphy B."/>
            <person name="Murphy L."/>
            <person name="Muzny D.M."/>
            <person name="Nelson D.L."/>
            <person name="Nelson D.R."/>
            <person name="Nelson K.A."/>
            <person name="Nixon K."/>
            <person name="Nusskern D.R."/>
            <person name="Pacleb J.M."/>
            <person name="Palazzolo M."/>
            <person name="Pittman G.S."/>
            <person name="Pan S."/>
            <person name="Pollard J."/>
            <person name="Puri V."/>
            <person name="Reese M.G."/>
            <person name="Reinert K."/>
            <person name="Remington K."/>
            <person name="Saunders R.D.C."/>
            <person name="Scheeler F."/>
            <person name="Shen H."/>
            <person name="Shue B.C."/>
            <person name="Siden-Kiamos I."/>
            <person name="Simpson M."/>
            <person name="Skupski M.P."/>
            <person name="Smith T.J."/>
            <person name="Spier E."/>
            <person name="Spradling A.C."/>
            <person name="Stapleton M."/>
            <person name="Strong R."/>
            <person name="Sun E."/>
            <person name="Svirskas R."/>
            <person name="Tector C."/>
            <person name="Turner R."/>
            <person name="Venter E."/>
            <person name="Wang A.H."/>
            <person name="Wang X."/>
            <person name="Wang Z.-Y."/>
            <person name="Wassarman D.A."/>
            <person name="Weinstock G.M."/>
            <person name="Weissenbach J."/>
            <person name="Williams S.M."/>
            <person name="Woodage T."/>
            <person name="Worley K.C."/>
            <person name="Wu D."/>
            <person name="Yang S."/>
            <person name="Yao Q.A."/>
            <person name="Ye J."/>
            <person name="Yeh R.-F."/>
            <person name="Zaveri J.S."/>
            <person name="Zhan M."/>
            <person name="Zhang G."/>
            <person name="Zhao Q."/>
            <person name="Zheng L."/>
            <person name="Zheng X.H."/>
            <person name="Zhong F.N."/>
            <person name="Zhong W."/>
            <person name="Zhou X."/>
            <person name="Zhu S.C."/>
            <person name="Zhu X."/>
            <person name="Smith H.O."/>
            <person name="Gibbs R.A."/>
            <person name="Myers E.W."/>
            <person name="Rubin G.M."/>
            <person name="Venter J.C."/>
        </authorList>
    </citation>
    <scope>NUCLEOTIDE SEQUENCE [LARGE SCALE GENOMIC DNA]</scope>
    <source>
        <strain>Berkeley</strain>
    </source>
</reference>
<reference key="2">
    <citation type="journal article" date="2002" name="Genome Biol.">
        <title>Annotation of the Drosophila melanogaster euchromatic genome: a systematic review.</title>
        <authorList>
            <person name="Misra S."/>
            <person name="Crosby M.A."/>
            <person name="Mungall C.J."/>
            <person name="Matthews B.B."/>
            <person name="Campbell K.S."/>
            <person name="Hradecky P."/>
            <person name="Huang Y."/>
            <person name="Kaminker J.S."/>
            <person name="Millburn G.H."/>
            <person name="Prochnik S.E."/>
            <person name="Smith C.D."/>
            <person name="Tupy J.L."/>
            <person name="Whitfield E.J."/>
            <person name="Bayraktaroglu L."/>
            <person name="Berman B.P."/>
            <person name="Bettencourt B.R."/>
            <person name="Celniker S.E."/>
            <person name="de Grey A.D.N.J."/>
            <person name="Drysdale R.A."/>
            <person name="Harris N.L."/>
            <person name="Richter J."/>
            <person name="Russo S."/>
            <person name="Schroeder A.J."/>
            <person name="Shu S.Q."/>
            <person name="Stapleton M."/>
            <person name="Yamada C."/>
            <person name="Ashburner M."/>
            <person name="Gelbart W.M."/>
            <person name="Rubin G.M."/>
            <person name="Lewis S.E."/>
        </authorList>
    </citation>
    <scope>GENOME REANNOTATION</scope>
    <source>
        <strain>Berkeley</strain>
    </source>
</reference>
<reference key="3">
    <citation type="journal article" date="2002" name="Genome Biol.">
        <title>A Drosophila full-length cDNA resource.</title>
        <authorList>
            <person name="Stapleton M."/>
            <person name="Carlson J.W."/>
            <person name="Brokstein P."/>
            <person name="Yu C."/>
            <person name="Champe M."/>
            <person name="George R.A."/>
            <person name="Guarin H."/>
            <person name="Kronmiller B."/>
            <person name="Pacleb J.M."/>
            <person name="Park S."/>
            <person name="Wan K.H."/>
            <person name="Rubin G.M."/>
            <person name="Celniker S.E."/>
        </authorList>
    </citation>
    <scope>NUCLEOTIDE SEQUENCE [LARGE SCALE MRNA]</scope>
    <source>
        <strain>Berkeley</strain>
        <tissue>Head</tissue>
    </source>
</reference>
<reference key="4">
    <citation type="submission" date="2008-12" db="EMBL/GenBank/DDBJ databases">
        <authorList>
            <person name="Carlson J.W."/>
            <person name="Booth B."/>
            <person name="Frise E."/>
            <person name="Park S."/>
            <person name="Wan K.H."/>
            <person name="Yu C."/>
            <person name="Celniker S.E."/>
        </authorList>
    </citation>
    <scope>NUCLEOTIDE SEQUENCE [LARGE SCALE MRNA]</scope>
    <source>
        <strain>Berkeley</strain>
    </source>
</reference>
<accession>Q9W2Y3</accession>
<accession>B6IDS2</accession>
<accession>Q8SX11</accession>
<organism>
    <name type="scientific">Drosophila melanogaster</name>
    <name type="common">Fruit fly</name>
    <dbReference type="NCBI Taxonomy" id="7227"/>
    <lineage>
        <taxon>Eukaryota</taxon>
        <taxon>Metazoa</taxon>
        <taxon>Ecdysozoa</taxon>
        <taxon>Arthropoda</taxon>
        <taxon>Hexapoda</taxon>
        <taxon>Insecta</taxon>
        <taxon>Pterygota</taxon>
        <taxon>Neoptera</taxon>
        <taxon>Endopterygota</taxon>
        <taxon>Diptera</taxon>
        <taxon>Brachycera</taxon>
        <taxon>Muscomorpha</taxon>
        <taxon>Ephydroidea</taxon>
        <taxon>Drosophilidae</taxon>
        <taxon>Drosophila</taxon>
        <taxon>Sophophora</taxon>
    </lineage>
</organism>
<dbReference type="EC" id="5.1.99.6"/>
<dbReference type="EMBL" id="AE014298">
    <property type="protein sequence ID" value="AAF46554.2"/>
    <property type="molecule type" value="Genomic_DNA"/>
</dbReference>
<dbReference type="EMBL" id="AY094914">
    <property type="protein sequence ID" value="AAM11267.1"/>
    <property type="status" value="ALT_INIT"/>
    <property type="molecule type" value="mRNA"/>
</dbReference>
<dbReference type="EMBL" id="BT050512">
    <property type="protein sequence ID" value="ACJ13219.1"/>
    <property type="status" value="ALT_INIT"/>
    <property type="molecule type" value="mRNA"/>
</dbReference>
<dbReference type="RefSeq" id="NP_572604.2">
    <property type="nucleotide sequence ID" value="NM_132376.2"/>
</dbReference>
<dbReference type="SMR" id="Q9W2Y3"/>
<dbReference type="BioGRID" id="58379">
    <property type="interactions" value="1"/>
</dbReference>
<dbReference type="FunCoup" id="Q9W2Y3">
    <property type="interactions" value="1397"/>
</dbReference>
<dbReference type="STRING" id="7227.FBpp0288673"/>
<dbReference type="PaxDb" id="7227-FBpp0288673"/>
<dbReference type="DNASU" id="31944"/>
<dbReference type="EnsemblMetazoa" id="FBtr0290234">
    <property type="protein sequence ID" value="FBpp0288673"/>
    <property type="gene ID" value="FBgn0030178"/>
</dbReference>
<dbReference type="GeneID" id="31944"/>
<dbReference type="KEGG" id="dme:Dmel_CG2974"/>
<dbReference type="UCSC" id="CG2974-RB">
    <property type="organism name" value="d. melanogaster"/>
</dbReference>
<dbReference type="AGR" id="FB:FBgn0030178"/>
<dbReference type="CTD" id="128240"/>
<dbReference type="FlyBase" id="FBgn0030178">
    <property type="gene designation" value="Naxe"/>
</dbReference>
<dbReference type="VEuPathDB" id="VectorBase:FBgn0030178"/>
<dbReference type="eggNOG" id="KOG2585">
    <property type="taxonomic scope" value="Eukaryota"/>
</dbReference>
<dbReference type="GeneTree" id="ENSGT00390000007227"/>
<dbReference type="HOGENOM" id="CLU_024853_3_0_1"/>
<dbReference type="InParanoid" id="Q9W2Y3"/>
<dbReference type="OMA" id="RHLFHYG"/>
<dbReference type="OrthoDB" id="10064708at2759"/>
<dbReference type="PhylomeDB" id="Q9W2Y3"/>
<dbReference type="Reactome" id="R-DME-197264">
    <property type="pathway name" value="Nicotinamide salvaging"/>
</dbReference>
<dbReference type="BioGRID-ORCS" id="31944">
    <property type="hits" value="0 hits in 3 CRISPR screens"/>
</dbReference>
<dbReference type="GenomeRNAi" id="31944"/>
<dbReference type="PRO" id="PR:Q9W2Y3"/>
<dbReference type="Proteomes" id="UP000000803">
    <property type="component" value="Chromosome X"/>
</dbReference>
<dbReference type="Bgee" id="FBgn0030178">
    <property type="expression patterns" value="Expressed in embryonic/larval hemocyte (Drosophila) and 49 other cell types or tissues"/>
</dbReference>
<dbReference type="GO" id="GO:0005829">
    <property type="term" value="C:cytosol"/>
    <property type="evidence" value="ECO:0000250"/>
    <property type="project" value="FlyBase"/>
</dbReference>
<dbReference type="GO" id="GO:0005739">
    <property type="term" value="C:mitochondrion"/>
    <property type="evidence" value="ECO:0000250"/>
    <property type="project" value="FlyBase"/>
</dbReference>
<dbReference type="GO" id="GO:0046872">
    <property type="term" value="F:metal ion binding"/>
    <property type="evidence" value="ECO:0007669"/>
    <property type="project" value="UniProtKB-KW"/>
</dbReference>
<dbReference type="GO" id="GO:0052856">
    <property type="term" value="F:NAD(P)HX epimerase activity"/>
    <property type="evidence" value="ECO:0000250"/>
    <property type="project" value="FlyBase"/>
</dbReference>
<dbReference type="GO" id="GO:0000166">
    <property type="term" value="F:nucleotide binding"/>
    <property type="evidence" value="ECO:0007669"/>
    <property type="project" value="UniProtKB-KW"/>
</dbReference>
<dbReference type="GO" id="GO:0110051">
    <property type="term" value="P:metabolite repair"/>
    <property type="evidence" value="ECO:0000250"/>
    <property type="project" value="FlyBase"/>
</dbReference>
<dbReference type="FunFam" id="3.40.50.10260:FF:000013">
    <property type="entry name" value="NAD(P)H-hydrate epimerase"/>
    <property type="match status" value="1"/>
</dbReference>
<dbReference type="Gene3D" id="3.40.50.10260">
    <property type="entry name" value="YjeF N-terminal domain"/>
    <property type="match status" value="1"/>
</dbReference>
<dbReference type="HAMAP" id="MF_01966">
    <property type="entry name" value="NADHX_epimerase"/>
    <property type="match status" value="1"/>
</dbReference>
<dbReference type="InterPro" id="IPR004443">
    <property type="entry name" value="YjeF_N_dom"/>
</dbReference>
<dbReference type="InterPro" id="IPR036652">
    <property type="entry name" value="YjeF_N_dom_sf"/>
</dbReference>
<dbReference type="InterPro" id="IPR032976">
    <property type="entry name" value="YJEFN_prot_NAXE-like"/>
</dbReference>
<dbReference type="NCBIfam" id="TIGR00197">
    <property type="entry name" value="yjeF_nterm"/>
    <property type="match status" value="1"/>
</dbReference>
<dbReference type="PANTHER" id="PTHR13232">
    <property type="entry name" value="NAD(P)H-HYDRATE EPIMERASE"/>
    <property type="match status" value="1"/>
</dbReference>
<dbReference type="PANTHER" id="PTHR13232:SF10">
    <property type="entry name" value="NAD(P)H-HYDRATE EPIMERASE"/>
    <property type="match status" value="1"/>
</dbReference>
<dbReference type="Pfam" id="PF03853">
    <property type="entry name" value="YjeF_N"/>
    <property type="match status" value="1"/>
</dbReference>
<dbReference type="SUPFAM" id="SSF64153">
    <property type="entry name" value="YjeF N-terminal domain-like"/>
    <property type="match status" value="1"/>
</dbReference>
<dbReference type="PROSITE" id="PS51385">
    <property type="entry name" value="YJEF_N"/>
    <property type="match status" value="1"/>
</dbReference>
<proteinExistence type="evidence at transcript level"/>
<protein>
    <recommendedName>
        <fullName evidence="1">NAD(P)H-hydrate epimerase</fullName>
        <ecNumber>5.1.99.6</ecNumber>
    </recommendedName>
    <alternativeName>
        <fullName evidence="1">NAD(P)HX epimerase</fullName>
    </alternativeName>
</protein>
<gene>
    <name evidence="3" type="primary">Naxe</name>
    <name evidence="3" type="ORF">CG2974</name>
</gene>
<feature type="chain" id="PRO_0000292426" description="NAD(P)H-hydrate epimerase">
    <location>
        <begin position="1"/>
        <end position="230"/>
    </location>
</feature>
<feature type="domain" description="YjeF N-terminal" evidence="1">
    <location>
        <begin position="11"/>
        <end position="218"/>
    </location>
</feature>
<feature type="binding site" evidence="1">
    <location>
        <begin position="61"/>
        <end position="65"/>
    </location>
    <ligand>
        <name>(6S)-NADPHX</name>
        <dbReference type="ChEBI" id="CHEBI:64076"/>
    </ligand>
</feature>
<feature type="binding site" evidence="1">
    <location>
        <position position="62"/>
    </location>
    <ligand>
        <name>K(+)</name>
        <dbReference type="ChEBI" id="CHEBI:29103"/>
    </ligand>
</feature>
<feature type="binding site" evidence="1">
    <location>
        <position position="126"/>
    </location>
    <ligand>
        <name>K(+)</name>
        <dbReference type="ChEBI" id="CHEBI:29103"/>
    </ligand>
</feature>
<feature type="binding site" evidence="1">
    <location>
        <begin position="130"/>
        <end position="136"/>
    </location>
    <ligand>
        <name>(6S)-NADPHX</name>
        <dbReference type="ChEBI" id="CHEBI:64076"/>
    </ligand>
</feature>
<feature type="binding site" evidence="1">
    <location>
        <position position="159"/>
    </location>
    <ligand>
        <name>(6S)-NADPHX</name>
        <dbReference type="ChEBI" id="CHEBI:64076"/>
    </ligand>
</feature>
<feature type="binding site" evidence="1">
    <location>
        <position position="162"/>
    </location>
    <ligand>
        <name>K(+)</name>
        <dbReference type="ChEBI" id="CHEBI:29103"/>
    </ligand>
</feature>
<feature type="sequence conflict" description="In Ref. 3; AAM11267." evidence="2" ref="3">
    <original>A</original>
    <variation>S</variation>
    <location>
        <position position="186"/>
    </location>
</feature>
<name>NNRE_DROME</name>
<keyword id="KW-0413">Isomerase</keyword>
<keyword id="KW-0479">Metal-binding</keyword>
<keyword id="KW-0520">NAD</keyword>
<keyword id="KW-0521">NADP</keyword>
<keyword id="KW-0547">Nucleotide-binding</keyword>
<keyword id="KW-0630">Potassium</keyword>
<keyword id="KW-1185">Reference proteome</keyword>